<dbReference type="GO" id="GO:0005576">
    <property type="term" value="C:extracellular region"/>
    <property type="evidence" value="ECO:0007669"/>
    <property type="project" value="UniProtKB-SubCell"/>
</dbReference>
<dbReference type="GO" id="GO:0007218">
    <property type="term" value="P:neuropeptide signaling pathway"/>
    <property type="evidence" value="ECO:0007669"/>
    <property type="project" value="UniProtKB-KW"/>
</dbReference>
<name>PVK1_SHELA</name>
<feature type="peptide" id="PRO_0000378769" description="Periviscerokinin-1" evidence="2">
    <location>
        <begin position="1"/>
        <end position="11"/>
    </location>
</feature>
<feature type="modified residue" description="Asparagine amide" evidence="2">
    <location>
        <position position="11"/>
    </location>
</feature>
<keyword id="KW-0027">Amidation</keyword>
<keyword id="KW-0903">Direct protein sequencing</keyword>
<keyword id="KW-0527">Neuropeptide</keyword>
<keyword id="KW-0964">Secreted</keyword>
<protein>
    <recommendedName>
        <fullName evidence="3">Periviscerokinin-1</fullName>
        <shortName evidence="3">SheLa-PVK-1</shortName>
    </recommendedName>
</protein>
<proteinExistence type="evidence at protein level"/>
<sequence length="11" mass="1114">GASGLIPVMRN</sequence>
<reference evidence="4" key="1">
    <citation type="journal article" date="2009" name="BMC Evol. Biol.">
        <title>A proteomic approach for studying insect phylogeny: CAPA peptides of ancient insect taxa (Dictyoptera, Blattoptera) as a test case.</title>
        <authorList>
            <person name="Roth S."/>
            <person name="Fromm B."/>
            <person name="Gaede G."/>
            <person name="Predel R."/>
        </authorList>
    </citation>
    <scope>PROTEIN SEQUENCE</scope>
    <scope>AMIDATION AT ASN-11</scope>
    <source>
        <tissue evidence="2">Abdominal perisympathetic organs</tissue>
    </source>
</reference>
<evidence type="ECO:0000255" key="1"/>
<evidence type="ECO:0000269" key="2">
    <source>
    </source>
</evidence>
<evidence type="ECO:0000303" key="3">
    <source>
    </source>
</evidence>
<evidence type="ECO:0000305" key="4"/>
<comment type="function">
    <text evidence="4">Mediates visceral muscle contractile activity (myotropic activity).</text>
</comment>
<comment type="subcellular location">
    <subcellularLocation>
        <location evidence="4">Secreted</location>
    </subcellularLocation>
</comment>
<comment type="similarity">
    <text evidence="1">Belongs to the periviscerokinin family.</text>
</comment>
<organism>
    <name type="scientific">Shelfordella lateralis</name>
    <name type="common">Turkestan cockroach</name>
    <name type="synonym">Periplaneta lateralis</name>
    <dbReference type="NCBI Taxonomy" id="36981"/>
    <lineage>
        <taxon>Eukaryota</taxon>
        <taxon>Metazoa</taxon>
        <taxon>Ecdysozoa</taxon>
        <taxon>Arthropoda</taxon>
        <taxon>Hexapoda</taxon>
        <taxon>Insecta</taxon>
        <taxon>Pterygota</taxon>
        <taxon>Neoptera</taxon>
        <taxon>Polyneoptera</taxon>
        <taxon>Dictyoptera</taxon>
        <taxon>Blattodea</taxon>
        <taxon>Blattoidea</taxon>
        <taxon>Blattidae</taxon>
        <taxon>Blattinae</taxon>
        <taxon>Periplaneta</taxon>
    </lineage>
</organism>
<accession>P85772</accession>